<organism>
    <name type="scientific">Burkholderia pseudomallei (strain 668)</name>
    <dbReference type="NCBI Taxonomy" id="320373"/>
    <lineage>
        <taxon>Bacteria</taxon>
        <taxon>Pseudomonadati</taxon>
        <taxon>Pseudomonadota</taxon>
        <taxon>Betaproteobacteria</taxon>
        <taxon>Burkholderiales</taxon>
        <taxon>Burkholderiaceae</taxon>
        <taxon>Burkholderia</taxon>
        <taxon>pseudomallei group</taxon>
    </lineage>
</organism>
<reference key="1">
    <citation type="journal article" date="2010" name="Genome Biol. Evol.">
        <title>Continuing evolution of Burkholderia mallei through genome reduction and large-scale rearrangements.</title>
        <authorList>
            <person name="Losada L."/>
            <person name="Ronning C.M."/>
            <person name="DeShazer D."/>
            <person name="Woods D."/>
            <person name="Fedorova N."/>
            <person name="Kim H.S."/>
            <person name="Shabalina S.A."/>
            <person name="Pearson T.R."/>
            <person name="Brinkac L."/>
            <person name="Tan P."/>
            <person name="Nandi T."/>
            <person name="Crabtree J."/>
            <person name="Badger J."/>
            <person name="Beckstrom-Sternberg S."/>
            <person name="Saqib M."/>
            <person name="Schutzer S.E."/>
            <person name="Keim P."/>
            <person name="Nierman W.C."/>
        </authorList>
    </citation>
    <scope>NUCLEOTIDE SEQUENCE [LARGE SCALE GENOMIC DNA]</scope>
    <source>
        <strain>668</strain>
    </source>
</reference>
<proteinExistence type="inferred from homology"/>
<gene>
    <name evidence="1" type="primary">ureF</name>
    <name type="ordered locus">BURPS668_3078</name>
</gene>
<keyword id="KW-0143">Chaperone</keyword>
<keyword id="KW-0963">Cytoplasm</keyword>
<keyword id="KW-0996">Nickel insertion</keyword>
<name>UREF_BURP6</name>
<protein>
    <recommendedName>
        <fullName evidence="1">Urease accessory protein UreF</fullName>
    </recommendedName>
</protein>
<sequence>MDTAELVALLHLASPALPIGAFSYSQGLEAALDAPLIRDADGARDWIASGLADVLAQGELPFLAHQLARWHAHDAAALADANDEFVASRESFELRRETEQMGWSLAQLCASLEWGDAARRATLASIPSVALPSAFAFAAAAHGATPDAALAAYAFGWVENQTAAAIKAVPLGQLAGQKIIVALREPIRDAVRRALATPPEAINTFAPQLGILSARHESQYSRLFRS</sequence>
<evidence type="ECO:0000255" key="1">
    <source>
        <dbReference type="HAMAP-Rule" id="MF_01385"/>
    </source>
</evidence>
<evidence type="ECO:0000305" key="2"/>
<comment type="function">
    <text evidence="1">Required for maturation of urease via the functional incorporation of the urease nickel metallocenter.</text>
</comment>
<comment type="subunit">
    <text evidence="1">UreD, UreF and UreG form a complex that acts as a GTP-hydrolysis-dependent molecular chaperone, activating the urease apoprotein by helping to assemble the nickel containing metallocenter of UreC. The UreE protein probably delivers the nickel.</text>
</comment>
<comment type="subcellular location">
    <subcellularLocation>
        <location evidence="1">Cytoplasm</location>
    </subcellularLocation>
</comment>
<comment type="similarity">
    <text evidence="1">Belongs to the UreF family.</text>
</comment>
<comment type="sequence caution" evidence="2">
    <conflict type="erroneous initiation">
        <sequence resource="EMBL-CDS" id="ABN84315"/>
    </conflict>
</comment>
<dbReference type="EMBL" id="CP000570">
    <property type="protein sequence ID" value="ABN84315.1"/>
    <property type="status" value="ALT_INIT"/>
    <property type="molecule type" value="Genomic_DNA"/>
</dbReference>
<dbReference type="RefSeq" id="WP_004533998.1">
    <property type="nucleotide sequence ID" value="NC_009074.1"/>
</dbReference>
<dbReference type="SMR" id="A3NCL9"/>
<dbReference type="KEGG" id="bpd:BURPS668_3078"/>
<dbReference type="HOGENOM" id="CLU_049215_2_1_4"/>
<dbReference type="GO" id="GO:0005737">
    <property type="term" value="C:cytoplasm"/>
    <property type="evidence" value="ECO:0007669"/>
    <property type="project" value="UniProtKB-SubCell"/>
</dbReference>
<dbReference type="GO" id="GO:0016151">
    <property type="term" value="F:nickel cation binding"/>
    <property type="evidence" value="ECO:0007669"/>
    <property type="project" value="UniProtKB-UniRule"/>
</dbReference>
<dbReference type="Gene3D" id="1.10.4190.10">
    <property type="entry name" value="Urease accessory protein UreF"/>
    <property type="match status" value="1"/>
</dbReference>
<dbReference type="HAMAP" id="MF_01385">
    <property type="entry name" value="UreF"/>
    <property type="match status" value="1"/>
</dbReference>
<dbReference type="InterPro" id="IPR002639">
    <property type="entry name" value="UreF"/>
</dbReference>
<dbReference type="InterPro" id="IPR038277">
    <property type="entry name" value="UreF_sf"/>
</dbReference>
<dbReference type="PANTHER" id="PTHR33620">
    <property type="entry name" value="UREASE ACCESSORY PROTEIN F"/>
    <property type="match status" value="1"/>
</dbReference>
<dbReference type="PANTHER" id="PTHR33620:SF1">
    <property type="entry name" value="UREASE ACCESSORY PROTEIN F"/>
    <property type="match status" value="1"/>
</dbReference>
<dbReference type="Pfam" id="PF01730">
    <property type="entry name" value="UreF"/>
    <property type="match status" value="1"/>
</dbReference>
<dbReference type="PIRSF" id="PIRSF009467">
    <property type="entry name" value="Ureas_acces_UreF"/>
    <property type="match status" value="1"/>
</dbReference>
<accession>A3NCL9</accession>
<feature type="chain" id="PRO_0000344108" description="Urease accessory protein UreF">
    <location>
        <begin position="1"/>
        <end position="226"/>
    </location>
</feature>